<name>UBIC_SALEP</name>
<dbReference type="EC" id="4.1.3.40" evidence="1"/>
<dbReference type="EMBL" id="AM933172">
    <property type="protein sequence ID" value="CAR35566.1"/>
    <property type="molecule type" value="Genomic_DNA"/>
</dbReference>
<dbReference type="RefSeq" id="WP_000019219.1">
    <property type="nucleotide sequence ID" value="NC_011294.1"/>
</dbReference>
<dbReference type="SMR" id="B5QZ58"/>
<dbReference type="KEGG" id="set:SEN4002"/>
<dbReference type="HOGENOM" id="CLU_096824_1_0_6"/>
<dbReference type="UniPathway" id="UPA00232"/>
<dbReference type="Proteomes" id="UP000000613">
    <property type="component" value="Chromosome"/>
</dbReference>
<dbReference type="GO" id="GO:0005829">
    <property type="term" value="C:cytosol"/>
    <property type="evidence" value="ECO:0007669"/>
    <property type="project" value="TreeGrafter"/>
</dbReference>
<dbReference type="GO" id="GO:0008813">
    <property type="term" value="F:chorismate lyase activity"/>
    <property type="evidence" value="ECO:0007669"/>
    <property type="project" value="UniProtKB-UniRule"/>
</dbReference>
<dbReference type="GO" id="GO:0042866">
    <property type="term" value="P:pyruvate biosynthetic process"/>
    <property type="evidence" value="ECO:0007669"/>
    <property type="project" value="UniProtKB-UniRule"/>
</dbReference>
<dbReference type="GO" id="GO:0006744">
    <property type="term" value="P:ubiquinone biosynthetic process"/>
    <property type="evidence" value="ECO:0007669"/>
    <property type="project" value="UniProtKB-UniRule"/>
</dbReference>
<dbReference type="FunFam" id="3.40.1410.10:FF:000002">
    <property type="entry name" value="Chorismate pyruvate-lyase"/>
    <property type="match status" value="1"/>
</dbReference>
<dbReference type="Gene3D" id="3.40.1410.10">
    <property type="entry name" value="Chorismate lyase-like"/>
    <property type="match status" value="1"/>
</dbReference>
<dbReference type="HAMAP" id="MF_01632">
    <property type="entry name" value="UbiC"/>
    <property type="match status" value="1"/>
</dbReference>
<dbReference type="InterPro" id="IPR007440">
    <property type="entry name" value="Chorismate--pyruvate_lyase"/>
</dbReference>
<dbReference type="InterPro" id="IPR028978">
    <property type="entry name" value="Chorismate_lyase_/UTRA_dom_sf"/>
</dbReference>
<dbReference type="NCBIfam" id="NF008656">
    <property type="entry name" value="PRK11655.1"/>
    <property type="match status" value="1"/>
</dbReference>
<dbReference type="PANTHER" id="PTHR38683">
    <property type="entry name" value="CHORISMATE PYRUVATE-LYASE"/>
    <property type="match status" value="1"/>
</dbReference>
<dbReference type="PANTHER" id="PTHR38683:SF1">
    <property type="entry name" value="CHORISMATE PYRUVATE-LYASE"/>
    <property type="match status" value="1"/>
</dbReference>
<dbReference type="Pfam" id="PF04345">
    <property type="entry name" value="Chor_lyase"/>
    <property type="match status" value="1"/>
</dbReference>
<dbReference type="SUPFAM" id="SSF64288">
    <property type="entry name" value="Chorismate lyase-like"/>
    <property type="match status" value="1"/>
</dbReference>
<sequence>MSHPALTQLRALRYFDAIPALEPHLLDWLLLEDSMTKRFEQQGKRVSVTLIREAFVGQSEVEEASGLLPSESRYWLREILLCADGEPWLAGRTVVPESTLCGPEQVLQHLGKTPLGRYLFTSSTLTRDFIEIGRDATLWGRRSRLRLSGKPLLLTELFLPASPLY</sequence>
<gene>
    <name evidence="1" type="primary">ubiC</name>
    <name type="ordered locus">SEN4002</name>
</gene>
<organism>
    <name type="scientific">Salmonella enteritidis PT4 (strain P125109)</name>
    <dbReference type="NCBI Taxonomy" id="550537"/>
    <lineage>
        <taxon>Bacteria</taxon>
        <taxon>Pseudomonadati</taxon>
        <taxon>Pseudomonadota</taxon>
        <taxon>Gammaproteobacteria</taxon>
        <taxon>Enterobacterales</taxon>
        <taxon>Enterobacteriaceae</taxon>
        <taxon>Salmonella</taxon>
    </lineage>
</organism>
<proteinExistence type="inferred from homology"/>
<accession>B5QZ58</accession>
<protein>
    <recommendedName>
        <fullName evidence="1">Chorismate pyruvate-lyase</fullName>
        <shortName evidence="1">CL</shortName>
        <shortName evidence="1">CPL</shortName>
        <ecNumber evidence="1">4.1.3.40</ecNumber>
    </recommendedName>
</protein>
<evidence type="ECO:0000255" key="1">
    <source>
        <dbReference type="HAMAP-Rule" id="MF_01632"/>
    </source>
</evidence>
<comment type="function">
    <text evidence="1">Removes the pyruvyl group from chorismate, with concomitant aromatization of the ring, to provide 4-hydroxybenzoate (4HB) for the ubiquinone pathway.</text>
</comment>
<comment type="catalytic activity">
    <reaction evidence="1">
        <text>chorismate = 4-hydroxybenzoate + pyruvate</text>
        <dbReference type="Rhea" id="RHEA:16505"/>
        <dbReference type="ChEBI" id="CHEBI:15361"/>
        <dbReference type="ChEBI" id="CHEBI:17879"/>
        <dbReference type="ChEBI" id="CHEBI:29748"/>
        <dbReference type="EC" id="4.1.3.40"/>
    </reaction>
</comment>
<comment type="pathway">
    <text evidence="1">Cofactor biosynthesis; ubiquinone biosynthesis.</text>
</comment>
<comment type="subunit">
    <text evidence="1">Monomer.</text>
</comment>
<comment type="subcellular location">
    <subcellularLocation>
        <location evidence="1">Cytoplasm</location>
    </subcellularLocation>
</comment>
<comment type="similarity">
    <text evidence="1">Belongs to the UbiC family.</text>
</comment>
<feature type="chain" id="PRO_1000186533" description="Chorismate pyruvate-lyase">
    <location>
        <begin position="1"/>
        <end position="165"/>
    </location>
</feature>
<feature type="binding site" evidence="1">
    <location>
        <position position="35"/>
    </location>
    <ligand>
        <name>substrate</name>
    </ligand>
</feature>
<feature type="binding site" evidence="1">
    <location>
        <position position="77"/>
    </location>
    <ligand>
        <name>substrate</name>
    </ligand>
</feature>
<feature type="binding site" evidence="1">
    <location>
        <position position="115"/>
    </location>
    <ligand>
        <name>substrate</name>
    </ligand>
</feature>
<feature type="binding site" evidence="1">
    <location>
        <position position="156"/>
    </location>
    <ligand>
        <name>substrate</name>
    </ligand>
</feature>
<reference key="1">
    <citation type="journal article" date="2008" name="Genome Res.">
        <title>Comparative genome analysis of Salmonella enteritidis PT4 and Salmonella gallinarum 287/91 provides insights into evolutionary and host adaptation pathways.</title>
        <authorList>
            <person name="Thomson N.R."/>
            <person name="Clayton D.J."/>
            <person name="Windhorst D."/>
            <person name="Vernikos G."/>
            <person name="Davidson S."/>
            <person name="Churcher C."/>
            <person name="Quail M.A."/>
            <person name="Stevens M."/>
            <person name="Jones M.A."/>
            <person name="Watson M."/>
            <person name="Barron A."/>
            <person name="Layton A."/>
            <person name="Pickard D."/>
            <person name="Kingsley R.A."/>
            <person name="Bignell A."/>
            <person name="Clark L."/>
            <person name="Harris B."/>
            <person name="Ormond D."/>
            <person name="Abdellah Z."/>
            <person name="Brooks K."/>
            <person name="Cherevach I."/>
            <person name="Chillingworth T."/>
            <person name="Woodward J."/>
            <person name="Norberczak H."/>
            <person name="Lord A."/>
            <person name="Arrowsmith C."/>
            <person name="Jagels K."/>
            <person name="Moule S."/>
            <person name="Mungall K."/>
            <person name="Saunders M."/>
            <person name="Whitehead S."/>
            <person name="Chabalgoity J.A."/>
            <person name="Maskell D."/>
            <person name="Humphreys T."/>
            <person name="Roberts M."/>
            <person name="Barrow P.A."/>
            <person name="Dougan G."/>
            <person name="Parkhill J."/>
        </authorList>
    </citation>
    <scope>NUCLEOTIDE SEQUENCE [LARGE SCALE GENOMIC DNA]</scope>
    <source>
        <strain>P125109</strain>
    </source>
</reference>
<keyword id="KW-0963">Cytoplasm</keyword>
<keyword id="KW-0456">Lyase</keyword>
<keyword id="KW-0670">Pyruvate</keyword>
<keyword id="KW-0831">Ubiquinone biosynthesis</keyword>